<protein>
    <recommendedName>
        <fullName>Cyclic GMP-AMP synthase-like receptor 3</fullName>
        <shortName evidence="4">Sp-cGLR3</shortName>
    </recommendedName>
    <alternativeName>
        <fullName evidence="5">Cyclic-di-AMP synthase cGLR3</fullName>
        <ecNumber evidence="3">2.7.7.85</ecNumber>
    </alternativeName>
</protein>
<name>CGLR3_STYPI</name>
<organism>
    <name type="scientific">Stylophora pistillata</name>
    <name type="common">Smooth cauliflower coral</name>
    <dbReference type="NCBI Taxonomy" id="50429"/>
    <lineage>
        <taxon>Eukaryota</taxon>
        <taxon>Metazoa</taxon>
        <taxon>Cnidaria</taxon>
        <taxon>Anthozoa</taxon>
        <taxon>Hexacorallia</taxon>
        <taxon>Scleractinia</taxon>
        <taxon>Astrocoeniina</taxon>
        <taxon>Pocilloporidae</taxon>
        <taxon>Stylophora</taxon>
    </lineage>
</organism>
<comment type="function">
    <text evidence="3">Nucleotidyltransferase that catalyzes the formation of cyclic di-AMP (3',3'-c-di-AMP) from 2 molecules of ATP and plays a key role in innate immunity (PubMed:37379839). Acts as a key sensor of double-stranded RNA (dsRNA), the presence of dsRNA in the cytoplasm being a danger signal that triggers the immune responses (PubMed:37379839). Directly binds dsRNA, activating the nucleotidyltransferase activity, leading to synthesis of 3',3'-c-di-AMP, a second messenger that binds to and activates Sting, thereby triggering the immune response via activation of the NF-kappa-B transcription factor (PubMed:37379839).</text>
</comment>
<comment type="catalytic activity">
    <reaction evidence="3">
        <text>2 ATP = 3',3'-c-di-AMP + 2 diphosphate</text>
        <dbReference type="Rhea" id="RHEA:35655"/>
        <dbReference type="ChEBI" id="CHEBI:30616"/>
        <dbReference type="ChEBI" id="CHEBI:33019"/>
        <dbReference type="ChEBI" id="CHEBI:71500"/>
        <dbReference type="EC" id="2.7.7.85"/>
    </reaction>
    <physiologicalReaction direction="left-to-right" evidence="3">
        <dbReference type="Rhea" id="RHEA:35656"/>
    </physiologicalReaction>
</comment>
<comment type="cofactor">
    <cofactor evidence="1">
        <name>Mg(2+)</name>
        <dbReference type="ChEBI" id="CHEBI:18420"/>
    </cofactor>
    <cofactor evidence="1">
        <name>Mn(2+)</name>
        <dbReference type="ChEBI" id="CHEBI:29035"/>
    </cofactor>
</comment>
<comment type="similarity">
    <text evidence="5">Belongs to the mab-21 family.</text>
</comment>
<reference key="1">
    <citation type="journal article" date="2017" name="Sci. Rep.">
        <title>Comparative analysis of the genomes of Stylophora pistillata and Acropora digitifera provides evidence for extensive differences between species of corals.</title>
        <authorList>
            <person name="Voolstra C.R."/>
            <person name="Li Y."/>
            <person name="Liew Y.J."/>
            <person name="Baumgarten S."/>
            <person name="Zoccola D."/>
            <person name="Flot J.F."/>
            <person name="Tambutte S."/>
            <person name="Allemand D."/>
            <person name="Aranda M."/>
        </authorList>
    </citation>
    <scope>NUCLEOTIDE SEQUENCE [LARGE SCALE GENOMIC DNA]</scope>
</reference>
<reference key="2">
    <citation type="journal article" date="2023" name="Cell">
        <title>cGLRs are a diverse family of pattern recognition receptors in innate immunity.</title>
        <authorList>
            <person name="Li Y."/>
            <person name="Slavik K.M."/>
            <person name="Toyoda H.C."/>
            <person name="Morehouse B.R."/>
            <person name="de Oliveira Mann C.C."/>
            <person name="Elek A."/>
            <person name="Levy S."/>
            <person name="Wang Z."/>
            <person name="Mears K.S."/>
            <person name="Liu J."/>
            <person name="Kashin D."/>
            <person name="Guo X."/>
            <person name="Mass T."/>
            <person name="Sebe-Pedros A."/>
            <person name="Schwede F."/>
            <person name="Kranzusch P.J."/>
        </authorList>
    </citation>
    <scope>FUNCTION</scope>
    <scope>CATALYTIC ACTIVITY</scope>
</reference>
<feature type="chain" id="PRO_0000460026" description="Cyclic GMP-AMP synthase-like receptor 3">
    <location>
        <begin position="1"/>
        <end position="340"/>
    </location>
</feature>
<feature type="binding site" evidence="2">
    <location>
        <position position="62"/>
    </location>
    <ligand>
        <name>ATP</name>
        <dbReference type="ChEBI" id="CHEBI:30616"/>
    </ligand>
</feature>
<feature type="binding site" evidence="2">
    <location>
        <begin position="74"/>
        <end position="76"/>
    </location>
    <ligand>
        <name>ATP</name>
        <dbReference type="ChEBI" id="CHEBI:30616"/>
    </ligand>
</feature>
<feature type="binding site" evidence="2">
    <location>
        <position position="74"/>
    </location>
    <ligand>
        <name>Mg(2+)</name>
        <dbReference type="ChEBI" id="CHEBI:18420"/>
        <note>catalytic</note>
    </ligand>
</feature>
<feature type="binding site" evidence="2">
    <location>
        <position position="76"/>
    </location>
    <ligand>
        <name>Mg(2+)</name>
        <dbReference type="ChEBI" id="CHEBI:18420"/>
        <note>catalytic</note>
    </ligand>
</feature>
<feature type="binding site" evidence="2">
    <location>
        <position position="177"/>
    </location>
    <ligand>
        <name>Mg(2+)</name>
        <dbReference type="ChEBI" id="CHEBI:18420"/>
        <note>catalytic</note>
    </ligand>
</feature>
<feature type="binding site" evidence="2">
    <location>
        <position position="241"/>
    </location>
    <ligand>
        <name>ATP</name>
        <dbReference type="ChEBI" id="CHEBI:30616"/>
    </ligand>
</feature>
<feature type="binding site" evidence="2">
    <location>
        <begin position="255"/>
        <end position="259"/>
    </location>
    <ligand>
        <name>ATP</name>
        <dbReference type="ChEBI" id="CHEBI:30616"/>
    </ligand>
</feature>
<feature type="binding site" evidence="1">
    <location>
        <position position="267"/>
    </location>
    <ligand>
        <name>Mn(2+)</name>
        <dbReference type="ChEBI" id="CHEBI:29035"/>
    </ligand>
</feature>
<feature type="binding site" evidence="1">
    <location>
        <position position="270"/>
    </location>
    <ligand>
        <name>Mn(2+)</name>
        <dbReference type="ChEBI" id="CHEBI:29035"/>
    </ligand>
</feature>
<accession>P0DXC0</accession>
<evidence type="ECO:0000250" key="1">
    <source>
        <dbReference type="UniProtKB" id="D6WI29"/>
    </source>
</evidence>
<evidence type="ECO:0000250" key="2">
    <source>
        <dbReference type="UniProtKB" id="Q8N884"/>
    </source>
</evidence>
<evidence type="ECO:0000269" key="3">
    <source>
    </source>
</evidence>
<evidence type="ECO:0000303" key="4">
    <source>
    </source>
</evidence>
<evidence type="ECO:0000305" key="5"/>
<keyword id="KW-0067">ATP-binding</keyword>
<keyword id="KW-0342">GTP-binding</keyword>
<keyword id="KW-0391">Immunity</keyword>
<keyword id="KW-0399">Innate immunity</keyword>
<keyword id="KW-0460">Magnesium</keyword>
<keyword id="KW-0464">Manganese</keyword>
<keyword id="KW-0479">Metal-binding</keyword>
<keyword id="KW-0547">Nucleotide-binding</keyword>
<keyword id="KW-0548">Nucleotidyltransferase</keyword>
<keyword id="KW-1185">Reference proteome</keyword>
<keyword id="KW-0808">Transferase</keyword>
<sequence>MALDASSLTRKLHVFSAKYVKISEETTRRARRLVKDYIEGQIIAYITENSNIEIQKLEYTGSFYEGLKTENADEADIMVVLKTPGSGIEVVQSQVPGYVHLKARDAPMFSKYMSPKGYIKAKKLRNSWFQSYVRRAVNKIEPQPPHSEVRLVVRSHGPAVQVDIIRKGSEEMLLSVDLVPCFQVEDSWYVPKPFKGKRYLSRNELLWRKTFSPKEKQILASMDKDPNGQGGCRHELLRIVKTVVKKPVTSLPLDSYHLKAAFMHYNDRGDLDWVSEDALGKNFFGFLMELQIRMESRNLPNYWLDGINLLDDFKEDVVKQMANRLRRILNSEVRLNKILE</sequence>
<proteinExistence type="evidence at protein level"/>
<dbReference type="EC" id="2.7.7.85" evidence="3"/>
<dbReference type="EMBL" id="LSMT01000226">
    <property type="status" value="NOT_ANNOTATED_CDS"/>
    <property type="molecule type" value="Genomic_DNA"/>
</dbReference>
<dbReference type="RefSeq" id="XP_022795063.1">
    <property type="nucleotide sequence ID" value="XM_022939328.1"/>
</dbReference>
<dbReference type="SMR" id="P0DXC0"/>
<dbReference type="GeneID" id="111333692"/>
<dbReference type="Proteomes" id="UP000225706">
    <property type="component" value="Unassembled WGS sequence"/>
</dbReference>
<dbReference type="GO" id="GO:0005524">
    <property type="term" value="F:ATP binding"/>
    <property type="evidence" value="ECO:0007669"/>
    <property type="project" value="UniProtKB-KW"/>
</dbReference>
<dbReference type="GO" id="GO:0003690">
    <property type="term" value="F:double-stranded DNA binding"/>
    <property type="evidence" value="ECO:0000314"/>
    <property type="project" value="UniProtKB"/>
</dbReference>
<dbReference type="GO" id="GO:0005525">
    <property type="term" value="F:GTP binding"/>
    <property type="evidence" value="ECO:0007669"/>
    <property type="project" value="UniProtKB-KW"/>
</dbReference>
<dbReference type="GO" id="GO:0046872">
    <property type="term" value="F:metal ion binding"/>
    <property type="evidence" value="ECO:0007669"/>
    <property type="project" value="UniProtKB-KW"/>
</dbReference>
<dbReference type="GO" id="GO:0016779">
    <property type="term" value="F:nucleotidyltransferase activity"/>
    <property type="evidence" value="ECO:0000314"/>
    <property type="project" value="UniProtKB"/>
</dbReference>
<dbReference type="GO" id="GO:0045087">
    <property type="term" value="P:innate immune response"/>
    <property type="evidence" value="ECO:0007669"/>
    <property type="project" value="UniProtKB-KW"/>
</dbReference>
<dbReference type="Gene3D" id="3.30.460.90">
    <property type="match status" value="1"/>
</dbReference>
<dbReference type="InterPro" id="IPR046903">
    <property type="entry name" value="Mab-21-like_nuc_Trfase"/>
</dbReference>
<dbReference type="InterPro" id="IPR046906">
    <property type="entry name" value="Mab-21_HhH/H2TH-like"/>
</dbReference>
<dbReference type="InterPro" id="IPR024810">
    <property type="entry name" value="MAB21L/cGLR"/>
</dbReference>
<dbReference type="PANTHER" id="PTHR10656">
    <property type="entry name" value="CELL FATE DETERMINING PROTEIN MAB21-RELATED"/>
    <property type="match status" value="1"/>
</dbReference>
<dbReference type="PANTHER" id="PTHR10656:SF42">
    <property type="entry name" value="CYCLIC GMP-AMP SYNTHASE-LIKE PROTEIN-RELATED"/>
    <property type="match status" value="1"/>
</dbReference>
<dbReference type="Pfam" id="PF03281">
    <property type="entry name" value="Mab-21"/>
    <property type="match status" value="1"/>
</dbReference>
<dbReference type="Pfam" id="PF20266">
    <property type="entry name" value="Mab-21_C"/>
    <property type="match status" value="1"/>
</dbReference>
<dbReference type="SMART" id="SM01265">
    <property type="entry name" value="Mab-21"/>
    <property type="match status" value="1"/>
</dbReference>